<comment type="function">
    <text evidence="1">Releases the N-terminal proline from various substrates.</text>
</comment>
<comment type="catalytic activity">
    <reaction evidence="3">
        <text>Release of N-terminal proline from a peptide.</text>
        <dbReference type="EC" id="3.4.11.5"/>
    </reaction>
</comment>
<comment type="subcellular location">
    <subcellularLocation>
        <location evidence="3">Cell envelope</location>
    </subcellularLocation>
</comment>
<comment type="similarity">
    <text evidence="5">Belongs to the peptidase S33 family.</text>
</comment>
<protein>
    <recommendedName>
        <fullName evidence="6">Proline iminopeptidase</fullName>
        <shortName evidence="3">PIP</shortName>
        <ecNumber>3.4.11.5</ecNumber>
    </recommendedName>
    <alternativeName>
        <fullName evidence="3">Prolyl aminopeptidase</fullName>
        <shortName evidence="3">PAP</shortName>
    </alternativeName>
</protein>
<accession>Q1G8L9</accession>
<name>PIP_LACDA</name>
<proteinExistence type="inferred from homology"/>
<reference evidence="6" key="1">
    <citation type="journal article" date="2006" name="Proc. Natl. Acad. Sci. U.S.A.">
        <title>The complete genome sequence of Lactobacillus bulgaricus reveals extensive and ongoing reductive evolution.</title>
        <authorList>
            <person name="van de Guchte M."/>
            <person name="Penaud S."/>
            <person name="Grimaldi C."/>
            <person name="Barbe V."/>
            <person name="Bryson K."/>
            <person name="Nicolas P."/>
            <person name="Robert C."/>
            <person name="Oztas S."/>
            <person name="Mangenot S."/>
            <person name="Couloux A."/>
            <person name="Loux V."/>
            <person name="Dervyn R."/>
            <person name="Bossy R."/>
            <person name="Bolotin A."/>
            <person name="Batto J.-M."/>
            <person name="Walunas T."/>
            <person name="Gibrat J.-F."/>
            <person name="Bessieres P."/>
            <person name="Weissenbach J."/>
            <person name="Ehrlich S.D."/>
            <person name="Maguin E."/>
        </authorList>
    </citation>
    <scope>NUCLEOTIDE SEQUENCE [LARGE SCALE GENOMIC DNA]</scope>
    <source>
        <strain>ATCC 11842 / DSM 20081 / BCRC 10696 / JCM 1002 / NBRC 13953 / NCIMB 11778 / NCTC 12712 / WDCM 00102 / Lb 14</strain>
    </source>
</reference>
<sequence length="295" mass="33027">MMQITEKYLPFGNWQTYCRIVGEATDRAPLLLLHGGPGSSHNYFEVLDQVAEKSGRQVIMYDQLGCGNSSIPDDQAETAYTAQTWVKELENVREQLGLDQIHLLGQSWGGMLALIYLCDYQPEGVKSLILSSTLASAKLWSQELHRLIKYLPKGEQAAIKEAETTGNYDSLAYQAANAHFMDQHAIKLTPDLPEPVLRKKKGGSLAYLTGWGPNEYTPIGNLHGYEYTDRLKDLHLPALITSGTDDLCTPLVAKSMYDNLPNARWELFAGCGHMPFVQENAKYQELLSDWLISQD</sequence>
<evidence type="ECO:0000250" key="1"/>
<evidence type="ECO:0000250" key="2">
    <source>
        <dbReference type="UniProtKB" id="O32449"/>
    </source>
</evidence>
<evidence type="ECO:0000250" key="3">
    <source>
        <dbReference type="UniProtKB" id="P46544"/>
    </source>
</evidence>
<evidence type="ECO:0000250" key="4">
    <source>
        <dbReference type="UniProtKB" id="P96084"/>
    </source>
</evidence>
<evidence type="ECO:0000255" key="5"/>
<evidence type="ECO:0000312" key="6">
    <source>
        <dbReference type="EMBL" id="CAI98634.1"/>
    </source>
</evidence>
<keyword id="KW-0031">Aminopeptidase</keyword>
<keyword id="KW-0378">Hydrolase</keyword>
<keyword id="KW-0645">Protease</keyword>
<keyword id="KW-1185">Reference proteome</keyword>
<feature type="chain" id="PRO_0000406324" description="Proline iminopeptidase">
    <location>
        <begin position="1"/>
        <end position="295"/>
    </location>
</feature>
<feature type="domain" description="AB hydrolase-1" evidence="5">
    <location>
        <begin position="29"/>
        <end position="279"/>
    </location>
</feature>
<feature type="active site" description="Nucleophile" evidence="4">
    <location>
        <position position="107"/>
    </location>
</feature>
<feature type="active site" evidence="2">
    <location>
        <position position="246"/>
    </location>
</feature>
<feature type="active site" description="Proton donor" evidence="4">
    <location>
        <position position="273"/>
    </location>
</feature>
<gene>
    <name evidence="6" type="primary">pepIP</name>
    <name type="ordered locus">Ldb1896</name>
</gene>
<dbReference type="EC" id="3.4.11.5"/>
<dbReference type="EMBL" id="CR954253">
    <property type="protein sequence ID" value="CAI98634.1"/>
    <property type="molecule type" value="Genomic_DNA"/>
</dbReference>
<dbReference type="SMR" id="Q1G8L9"/>
<dbReference type="STRING" id="390333.Ldb1896"/>
<dbReference type="ESTHER" id="lacdl-pip">
    <property type="family name" value="Proline_iminopeptidase"/>
</dbReference>
<dbReference type="MEROPS" id="S33.021"/>
<dbReference type="KEGG" id="ldb:Ldb1896"/>
<dbReference type="eggNOG" id="COG2267">
    <property type="taxonomic scope" value="Bacteria"/>
</dbReference>
<dbReference type="HOGENOM" id="CLU_020336_15_0_9"/>
<dbReference type="Proteomes" id="UP000001259">
    <property type="component" value="Chromosome"/>
</dbReference>
<dbReference type="GO" id="GO:0030313">
    <property type="term" value="C:cell envelope"/>
    <property type="evidence" value="ECO:0007669"/>
    <property type="project" value="UniProtKB-SubCell"/>
</dbReference>
<dbReference type="GO" id="GO:0016020">
    <property type="term" value="C:membrane"/>
    <property type="evidence" value="ECO:0007669"/>
    <property type="project" value="TreeGrafter"/>
</dbReference>
<dbReference type="GO" id="GO:0004177">
    <property type="term" value="F:aminopeptidase activity"/>
    <property type="evidence" value="ECO:0007669"/>
    <property type="project" value="UniProtKB-KW"/>
</dbReference>
<dbReference type="GO" id="GO:0047372">
    <property type="term" value="F:monoacylglycerol lipase activity"/>
    <property type="evidence" value="ECO:0007669"/>
    <property type="project" value="TreeGrafter"/>
</dbReference>
<dbReference type="GO" id="GO:0046464">
    <property type="term" value="P:acylglycerol catabolic process"/>
    <property type="evidence" value="ECO:0007669"/>
    <property type="project" value="TreeGrafter"/>
</dbReference>
<dbReference type="GO" id="GO:0006508">
    <property type="term" value="P:proteolysis"/>
    <property type="evidence" value="ECO:0007669"/>
    <property type="project" value="UniProtKB-KW"/>
</dbReference>
<dbReference type="Gene3D" id="3.40.50.1820">
    <property type="entry name" value="alpha/beta hydrolase"/>
    <property type="match status" value="1"/>
</dbReference>
<dbReference type="InterPro" id="IPR000073">
    <property type="entry name" value="AB_hydrolase_1"/>
</dbReference>
<dbReference type="InterPro" id="IPR029058">
    <property type="entry name" value="AB_hydrolase_fold"/>
</dbReference>
<dbReference type="InterPro" id="IPR050266">
    <property type="entry name" value="AB_hydrolase_sf"/>
</dbReference>
<dbReference type="InterPro" id="IPR002410">
    <property type="entry name" value="Peptidase_S33"/>
</dbReference>
<dbReference type="InterPro" id="IPR005945">
    <property type="entry name" value="Pro_imino_pep"/>
</dbReference>
<dbReference type="NCBIfam" id="TIGR01250">
    <property type="entry name" value="pro_imino_pep_2"/>
    <property type="match status" value="1"/>
</dbReference>
<dbReference type="NCBIfam" id="NF045945">
    <property type="entry name" value="ProImpepLactob"/>
    <property type="match status" value="1"/>
</dbReference>
<dbReference type="PANTHER" id="PTHR43798:SF33">
    <property type="entry name" value="HYDROLASE, PUTATIVE (AFU_ORTHOLOGUE AFUA_2G14860)-RELATED"/>
    <property type="match status" value="1"/>
</dbReference>
<dbReference type="PANTHER" id="PTHR43798">
    <property type="entry name" value="MONOACYLGLYCEROL LIPASE"/>
    <property type="match status" value="1"/>
</dbReference>
<dbReference type="Pfam" id="PF00561">
    <property type="entry name" value="Abhydrolase_1"/>
    <property type="match status" value="1"/>
</dbReference>
<dbReference type="PIRSF" id="PIRSF005539">
    <property type="entry name" value="Pept_S33_TRI_F1"/>
    <property type="match status" value="1"/>
</dbReference>
<dbReference type="PRINTS" id="PR00793">
    <property type="entry name" value="PROAMNOPTASE"/>
</dbReference>
<dbReference type="SUPFAM" id="SSF53474">
    <property type="entry name" value="alpha/beta-Hydrolases"/>
    <property type="match status" value="1"/>
</dbReference>
<organism>
    <name type="scientific">Lactobacillus delbrueckii subsp. bulgaricus (strain ATCC 11842 / DSM 20081 / BCRC 10696 / JCM 1002 / NBRC 13953 / NCIMB 11778 / NCTC 12712 / WDCM 00102 / Lb 14)</name>
    <dbReference type="NCBI Taxonomy" id="390333"/>
    <lineage>
        <taxon>Bacteria</taxon>
        <taxon>Bacillati</taxon>
        <taxon>Bacillota</taxon>
        <taxon>Bacilli</taxon>
        <taxon>Lactobacillales</taxon>
        <taxon>Lactobacillaceae</taxon>
        <taxon>Lactobacillus</taxon>
    </lineage>
</organism>